<protein>
    <recommendedName>
        <fullName>Probable methyltransferase PMT2</fullName>
        <ecNumber>2.1.1.-</ecNumber>
    </recommendedName>
</protein>
<gene>
    <name type="ordered locus">At1g26850</name>
    <name type="ORF">T2P11.4</name>
</gene>
<accession>B9DFI7</accession>
<accession>Q94C19</accession>
<accession>Q9ZVH2</accession>
<name>PMT2_ARATH</name>
<sequence>MALKSSSADGKTRSSVQIFIVFSLCCFFYILGAWQRSGFGKGDSIALEMTNSGADCNIVPSLNFETHHAGESSLVGASEAAKVKAFEPCDGRYTDYTPCQDQRRAMTFPRDSMIYRERHCAPENEKLHCLIPAPKGYVTPFSWPKSRDYVPYANAPYKALTVEKAIQNWIQYEGDVFRFPGGGTQFPQGADKYIDQLASVIPMENGTVRTALDTGCGVASWGAYLWSRNVRAMSFAPRDSHEAQVQFALERGVPAVIGVLGTIKLPYPTRAFDMAHCSRCLIPWGANDGMYLMEVDRVLRPGGYWILSGPPINWKVNYKAWQRPKEDLQEEQRKIEEAAKLLCWEKKYEHGEIAIWQKRVNDEACRSRQDDPRANFCKTDDTDDVWYKKMEACITPYPETSSSDEVAGGELQAFPDRLNAVPPRISSGSISGVTVDAYEDDNRQWKKHVKAYKRINSLLDTGRYRNIMDMNAGFGGFAAALESQKLWVMNVVPTIAEKNRLGVVYERGLIGIYHDWCEAFSTYPRTYDLIHANHLFSLYKNKCNADDILLEMDRILRPEGAVIIRDDVDTLIKVKRIIAGMRWDAKLVDHEDGPLVPEKVLIAVKQYWVTNSTSTH</sequence>
<proteinExistence type="evidence at transcript level"/>
<reference key="1">
    <citation type="journal article" date="2000" name="Nature">
        <title>Sequence and analysis of chromosome 1 of the plant Arabidopsis thaliana.</title>
        <authorList>
            <person name="Theologis A."/>
            <person name="Ecker J.R."/>
            <person name="Palm C.J."/>
            <person name="Federspiel N.A."/>
            <person name="Kaul S."/>
            <person name="White O."/>
            <person name="Alonso J."/>
            <person name="Altafi H."/>
            <person name="Araujo R."/>
            <person name="Bowman C.L."/>
            <person name="Brooks S.Y."/>
            <person name="Buehler E."/>
            <person name="Chan A."/>
            <person name="Chao Q."/>
            <person name="Chen H."/>
            <person name="Cheuk R.F."/>
            <person name="Chin C.W."/>
            <person name="Chung M.K."/>
            <person name="Conn L."/>
            <person name="Conway A.B."/>
            <person name="Conway A.R."/>
            <person name="Creasy T.H."/>
            <person name="Dewar K."/>
            <person name="Dunn P."/>
            <person name="Etgu P."/>
            <person name="Feldblyum T.V."/>
            <person name="Feng J.-D."/>
            <person name="Fong B."/>
            <person name="Fujii C.Y."/>
            <person name="Gill J.E."/>
            <person name="Goldsmith A.D."/>
            <person name="Haas B."/>
            <person name="Hansen N.F."/>
            <person name="Hughes B."/>
            <person name="Huizar L."/>
            <person name="Hunter J.L."/>
            <person name="Jenkins J."/>
            <person name="Johnson-Hopson C."/>
            <person name="Khan S."/>
            <person name="Khaykin E."/>
            <person name="Kim C.J."/>
            <person name="Koo H.L."/>
            <person name="Kremenetskaia I."/>
            <person name="Kurtz D.B."/>
            <person name="Kwan A."/>
            <person name="Lam B."/>
            <person name="Langin-Hooper S."/>
            <person name="Lee A."/>
            <person name="Lee J.M."/>
            <person name="Lenz C.A."/>
            <person name="Li J.H."/>
            <person name="Li Y.-P."/>
            <person name="Lin X."/>
            <person name="Liu S.X."/>
            <person name="Liu Z.A."/>
            <person name="Luros J.S."/>
            <person name="Maiti R."/>
            <person name="Marziali A."/>
            <person name="Militscher J."/>
            <person name="Miranda M."/>
            <person name="Nguyen M."/>
            <person name="Nierman W.C."/>
            <person name="Osborne B.I."/>
            <person name="Pai G."/>
            <person name="Peterson J."/>
            <person name="Pham P.K."/>
            <person name="Rizzo M."/>
            <person name="Rooney T."/>
            <person name="Rowley D."/>
            <person name="Sakano H."/>
            <person name="Salzberg S.L."/>
            <person name="Schwartz J.R."/>
            <person name="Shinn P."/>
            <person name="Southwick A.M."/>
            <person name="Sun H."/>
            <person name="Tallon L.J."/>
            <person name="Tambunga G."/>
            <person name="Toriumi M.J."/>
            <person name="Town C.D."/>
            <person name="Utterback T."/>
            <person name="Van Aken S."/>
            <person name="Vaysberg M."/>
            <person name="Vysotskaia V.S."/>
            <person name="Walker M."/>
            <person name="Wu D."/>
            <person name="Yu G."/>
            <person name="Fraser C.M."/>
            <person name="Venter J.C."/>
            <person name="Davis R.W."/>
        </authorList>
    </citation>
    <scope>NUCLEOTIDE SEQUENCE [LARGE SCALE GENOMIC DNA]</scope>
    <source>
        <strain>cv. Columbia</strain>
    </source>
</reference>
<reference key="2">
    <citation type="journal article" date="2017" name="Plant J.">
        <title>Araport11: a complete reannotation of the Arabidopsis thaliana reference genome.</title>
        <authorList>
            <person name="Cheng C.Y."/>
            <person name="Krishnakumar V."/>
            <person name="Chan A.P."/>
            <person name="Thibaud-Nissen F."/>
            <person name="Schobel S."/>
            <person name="Town C.D."/>
        </authorList>
    </citation>
    <scope>GENOME REANNOTATION</scope>
    <source>
        <strain>cv. Columbia</strain>
    </source>
</reference>
<reference key="3">
    <citation type="journal article" date="2003" name="Science">
        <title>Empirical analysis of transcriptional activity in the Arabidopsis genome.</title>
        <authorList>
            <person name="Yamada K."/>
            <person name="Lim J."/>
            <person name="Dale J.M."/>
            <person name="Chen H."/>
            <person name="Shinn P."/>
            <person name="Palm C.J."/>
            <person name="Southwick A.M."/>
            <person name="Wu H.C."/>
            <person name="Kim C.J."/>
            <person name="Nguyen M."/>
            <person name="Pham P.K."/>
            <person name="Cheuk R.F."/>
            <person name="Karlin-Newmann G."/>
            <person name="Liu S.X."/>
            <person name="Lam B."/>
            <person name="Sakano H."/>
            <person name="Wu T."/>
            <person name="Yu G."/>
            <person name="Miranda M."/>
            <person name="Quach H.L."/>
            <person name="Tripp M."/>
            <person name="Chang C.H."/>
            <person name="Lee J.M."/>
            <person name="Toriumi M.J."/>
            <person name="Chan M.M."/>
            <person name="Tang C.C."/>
            <person name="Onodera C.S."/>
            <person name="Deng J.M."/>
            <person name="Akiyama K."/>
            <person name="Ansari Y."/>
            <person name="Arakawa T."/>
            <person name="Banh J."/>
            <person name="Banno F."/>
            <person name="Bowser L."/>
            <person name="Brooks S.Y."/>
            <person name="Carninci P."/>
            <person name="Chao Q."/>
            <person name="Choy N."/>
            <person name="Enju A."/>
            <person name="Goldsmith A.D."/>
            <person name="Gurjal M."/>
            <person name="Hansen N.F."/>
            <person name="Hayashizaki Y."/>
            <person name="Johnson-Hopson C."/>
            <person name="Hsuan V.W."/>
            <person name="Iida K."/>
            <person name="Karnes M."/>
            <person name="Khan S."/>
            <person name="Koesema E."/>
            <person name="Ishida J."/>
            <person name="Jiang P.X."/>
            <person name="Jones T."/>
            <person name="Kawai J."/>
            <person name="Kamiya A."/>
            <person name="Meyers C."/>
            <person name="Nakajima M."/>
            <person name="Narusaka M."/>
            <person name="Seki M."/>
            <person name="Sakurai T."/>
            <person name="Satou M."/>
            <person name="Tamse R."/>
            <person name="Vaysberg M."/>
            <person name="Wallender E.K."/>
            <person name="Wong C."/>
            <person name="Yamamura Y."/>
            <person name="Yuan S."/>
            <person name="Shinozaki K."/>
            <person name="Davis R.W."/>
            <person name="Theologis A."/>
            <person name="Ecker J.R."/>
        </authorList>
    </citation>
    <scope>NUCLEOTIDE SEQUENCE [LARGE SCALE MRNA] (ISOFORM 1)</scope>
    <source>
        <strain>cv. Columbia</strain>
    </source>
</reference>
<reference key="4">
    <citation type="journal article" date="2009" name="DNA Res.">
        <title>Analysis of multiple occurrences of alternative splicing events in Arabidopsis thaliana using novel sequenced full-length cDNAs.</title>
        <authorList>
            <person name="Iida K."/>
            <person name="Fukami-Kobayashi K."/>
            <person name="Toyoda A."/>
            <person name="Sakaki Y."/>
            <person name="Kobayashi M."/>
            <person name="Seki M."/>
            <person name="Shinozaki K."/>
        </authorList>
    </citation>
    <scope>NUCLEOTIDE SEQUENCE [LARGE SCALE MRNA] (ISOFORM 1)</scope>
    <source>
        <strain>cv. Columbia</strain>
        <tissue>Rosette leaf</tissue>
    </source>
</reference>
<reference key="5">
    <citation type="journal article" date="2007" name="Plant J.">
        <title>Homogalacturonan synthesis in Arabidopsis thaliana requires a Golgi-localized protein with a putative methyltransferase domain.</title>
        <authorList>
            <person name="Mouille G."/>
            <person name="Ralet M.C."/>
            <person name="Cavelier C."/>
            <person name="Eland C."/>
            <person name="Effroy D."/>
            <person name="Hematy K."/>
            <person name="McCartney L."/>
            <person name="Truong H.N."/>
            <person name="Gaudon V."/>
            <person name="Thibault J.F."/>
            <person name="Marchant A."/>
            <person name="Hofte H."/>
        </authorList>
    </citation>
    <scope>GENE FAMILY</scope>
</reference>
<reference key="6">
    <citation type="journal article" date="2007" name="Plant J.">
        <title>The TUMOROUS SHOOT DEVELOPMENT2 gene of Arabidopsis encoding a putative methyltransferase is required for cell adhesion and co-ordinated plant development.</title>
        <authorList>
            <person name="Krupkova E."/>
            <person name="Immerzeel P."/>
            <person name="Pauly M."/>
            <person name="Schmulling T."/>
        </authorList>
    </citation>
    <scope>GENE FAMILY</scope>
</reference>
<dbReference type="EC" id="2.1.1.-"/>
<dbReference type="EMBL" id="AC005508">
    <property type="protein sequence ID" value="AAD14491.1"/>
    <property type="molecule type" value="Genomic_DNA"/>
</dbReference>
<dbReference type="EMBL" id="CP002684">
    <property type="protein sequence ID" value="AEE30749.1"/>
    <property type="molecule type" value="Genomic_DNA"/>
</dbReference>
<dbReference type="EMBL" id="CP002684">
    <property type="protein sequence ID" value="AEE30751.1"/>
    <property type="molecule type" value="Genomic_DNA"/>
</dbReference>
<dbReference type="EMBL" id="AY037230">
    <property type="protein sequence ID" value="AAK59830.1"/>
    <property type="molecule type" value="mRNA"/>
</dbReference>
<dbReference type="EMBL" id="BT000640">
    <property type="protein sequence ID" value="AAN18206.1"/>
    <property type="molecule type" value="mRNA"/>
</dbReference>
<dbReference type="EMBL" id="AK316786">
    <property type="protein sequence ID" value="BAH19504.1"/>
    <property type="molecule type" value="mRNA"/>
</dbReference>
<dbReference type="PIR" id="C86395">
    <property type="entry name" value="C86395"/>
</dbReference>
<dbReference type="RefSeq" id="NP_564265.1">
    <molecule id="B9DFI7-1"/>
    <property type="nucleotide sequence ID" value="NM_102449.4"/>
</dbReference>
<dbReference type="RefSeq" id="NP_849710.1">
    <molecule id="B9DFI7-1"/>
    <property type="nucleotide sequence ID" value="NM_179379.4"/>
</dbReference>
<dbReference type="BioGRID" id="24465">
    <property type="interactions" value="5"/>
</dbReference>
<dbReference type="FunCoup" id="B9DFI7">
    <property type="interactions" value="2842"/>
</dbReference>
<dbReference type="IntAct" id="B9DFI7">
    <property type="interactions" value="3"/>
</dbReference>
<dbReference type="STRING" id="3702.B9DFI7"/>
<dbReference type="GlyGen" id="B9DFI7">
    <property type="glycosylation" value="2 sites"/>
</dbReference>
<dbReference type="iPTMnet" id="B9DFI7"/>
<dbReference type="SwissPalm" id="B9DFI7"/>
<dbReference type="PaxDb" id="3702-AT1G26850.2"/>
<dbReference type="ProteomicsDB" id="234682">
    <molecule id="B9DFI7-1"/>
</dbReference>
<dbReference type="EnsemblPlants" id="AT1G26850.1">
    <molecule id="B9DFI7-1"/>
    <property type="protein sequence ID" value="AT1G26850.1"/>
    <property type="gene ID" value="AT1G26850"/>
</dbReference>
<dbReference type="EnsemblPlants" id="AT1G26850.2">
    <molecule id="B9DFI7-1"/>
    <property type="protein sequence ID" value="AT1G26850.2"/>
    <property type="gene ID" value="AT1G26850"/>
</dbReference>
<dbReference type="GeneID" id="839229"/>
<dbReference type="Gramene" id="AT1G26850.1">
    <molecule id="B9DFI7-1"/>
    <property type="protein sequence ID" value="AT1G26850.1"/>
    <property type="gene ID" value="AT1G26850"/>
</dbReference>
<dbReference type="Gramene" id="AT1G26850.2">
    <molecule id="B9DFI7-1"/>
    <property type="protein sequence ID" value="AT1G26850.2"/>
    <property type="gene ID" value="AT1G26850"/>
</dbReference>
<dbReference type="KEGG" id="ath:AT1G26850"/>
<dbReference type="Araport" id="AT1G26850"/>
<dbReference type="TAIR" id="AT1G26850"/>
<dbReference type="eggNOG" id="ENOG502QPR2">
    <property type="taxonomic scope" value="Eukaryota"/>
</dbReference>
<dbReference type="HOGENOM" id="CLU_010485_2_2_1"/>
<dbReference type="InParanoid" id="B9DFI7"/>
<dbReference type="OMA" id="RINICES"/>
<dbReference type="OrthoDB" id="2013972at2759"/>
<dbReference type="PhylomeDB" id="B9DFI7"/>
<dbReference type="PRO" id="PR:B9DFI7"/>
<dbReference type="Proteomes" id="UP000006548">
    <property type="component" value="Chromosome 1"/>
</dbReference>
<dbReference type="ExpressionAtlas" id="B9DFI7">
    <property type="expression patterns" value="baseline and differential"/>
</dbReference>
<dbReference type="GO" id="GO:0005768">
    <property type="term" value="C:endosome"/>
    <property type="evidence" value="ECO:0007005"/>
    <property type="project" value="TAIR"/>
</dbReference>
<dbReference type="GO" id="GO:0005794">
    <property type="term" value="C:Golgi apparatus"/>
    <property type="evidence" value="ECO:0007005"/>
    <property type="project" value="TAIR"/>
</dbReference>
<dbReference type="GO" id="GO:0005797">
    <property type="term" value="C:Golgi medial cisterna"/>
    <property type="evidence" value="ECO:0007005"/>
    <property type="project" value="TAIR"/>
</dbReference>
<dbReference type="GO" id="GO:0000139">
    <property type="term" value="C:Golgi membrane"/>
    <property type="evidence" value="ECO:0007669"/>
    <property type="project" value="UniProtKB-SubCell"/>
</dbReference>
<dbReference type="GO" id="GO:0005634">
    <property type="term" value="C:nucleus"/>
    <property type="evidence" value="ECO:0007005"/>
    <property type="project" value="TAIR"/>
</dbReference>
<dbReference type="GO" id="GO:0005802">
    <property type="term" value="C:trans-Golgi network"/>
    <property type="evidence" value="ECO:0007005"/>
    <property type="project" value="TAIR"/>
</dbReference>
<dbReference type="GO" id="GO:0008168">
    <property type="term" value="F:methyltransferase activity"/>
    <property type="evidence" value="ECO:0007669"/>
    <property type="project" value="UniProtKB-KW"/>
</dbReference>
<dbReference type="GO" id="GO:0032259">
    <property type="term" value="P:methylation"/>
    <property type="evidence" value="ECO:0007669"/>
    <property type="project" value="UniProtKB-KW"/>
</dbReference>
<dbReference type="FunFam" id="3.40.50.150:FF:000122">
    <property type="entry name" value="probable methyltransferase PMT2"/>
    <property type="match status" value="1"/>
</dbReference>
<dbReference type="Gene3D" id="3.40.50.150">
    <property type="entry name" value="Vaccinia Virus protein VP39"/>
    <property type="match status" value="1"/>
</dbReference>
<dbReference type="InterPro" id="IPR004159">
    <property type="entry name" value="Put_SAM_MeTrfase"/>
</dbReference>
<dbReference type="InterPro" id="IPR029063">
    <property type="entry name" value="SAM-dependent_MTases_sf"/>
</dbReference>
<dbReference type="PANTHER" id="PTHR10108:SF1119">
    <property type="entry name" value="METHYLTRANSFERASE PMT2-RELATED"/>
    <property type="match status" value="1"/>
</dbReference>
<dbReference type="PANTHER" id="PTHR10108">
    <property type="entry name" value="SAM-DEPENDENT METHYLTRANSFERASE"/>
    <property type="match status" value="1"/>
</dbReference>
<dbReference type="Pfam" id="PF03141">
    <property type="entry name" value="Methyltransf_29"/>
    <property type="match status" value="1"/>
</dbReference>
<dbReference type="SUPFAM" id="SSF53335">
    <property type="entry name" value="S-adenosyl-L-methionine-dependent methyltransferases"/>
    <property type="match status" value="2"/>
</dbReference>
<comment type="subcellular location">
    <subcellularLocation>
        <location evidence="2">Golgi apparatus membrane</location>
        <topology evidence="2">Single-pass type II membrane protein</topology>
    </subcellularLocation>
</comment>
<comment type="alternative products">
    <event type="alternative splicing"/>
    <isoform>
        <id>B9DFI7-1</id>
        <name>1</name>
        <sequence type="displayed"/>
    </isoform>
    <isoform>
        <id>B9DFI7-2</id>
        <name>2</name>
        <sequence type="described" ref="VSP_038900"/>
    </isoform>
</comment>
<comment type="miscellaneous">
    <text>Co-expressed with the galacturonosyltransferases GAUT1 and GAUT9.</text>
</comment>
<comment type="similarity">
    <text evidence="2">Belongs to the methyltransferase superfamily.</text>
</comment>
<keyword id="KW-0025">Alternative splicing</keyword>
<keyword id="KW-0325">Glycoprotein</keyword>
<keyword id="KW-0333">Golgi apparatus</keyword>
<keyword id="KW-0472">Membrane</keyword>
<keyword id="KW-0489">Methyltransferase</keyword>
<keyword id="KW-1185">Reference proteome</keyword>
<keyword id="KW-0735">Signal-anchor</keyword>
<keyword id="KW-0808">Transferase</keyword>
<keyword id="KW-0812">Transmembrane</keyword>
<keyword id="KW-1133">Transmembrane helix</keyword>
<feature type="chain" id="PRO_0000393242" description="Probable methyltransferase PMT2">
    <location>
        <begin position="1"/>
        <end position="616"/>
    </location>
</feature>
<feature type="topological domain" description="Cytoplasmic" evidence="1">
    <location>
        <begin position="1"/>
        <end position="13"/>
    </location>
</feature>
<feature type="transmembrane region" description="Helical; Signal-anchor for type II membrane protein" evidence="1">
    <location>
        <begin position="14"/>
        <end position="34"/>
    </location>
</feature>
<feature type="topological domain" description="Lumenal" evidence="1">
    <location>
        <begin position="35"/>
        <end position="616"/>
    </location>
</feature>
<feature type="glycosylation site" description="N-linked (GlcNAc...) asparagine" evidence="1">
    <location>
        <position position="205"/>
    </location>
</feature>
<feature type="glycosylation site" description="N-linked (GlcNAc...) asparagine" evidence="1">
    <location>
        <position position="611"/>
    </location>
</feature>
<feature type="splice variant" id="VSP_038900" description="In isoform 2." evidence="2">
    <location>
        <begin position="517"/>
        <end position="542"/>
    </location>
</feature>
<feature type="sequence conflict" description="In Ref. 4; BAH19504." evidence="2" ref="4">
    <original>E</original>
    <variation>K</variation>
    <location>
        <position position="123"/>
    </location>
</feature>
<evidence type="ECO:0000255" key="1"/>
<evidence type="ECO:0000305" key="2"/>
<organism>
    <name type="scientific">Arabidopsis thaliana</name>
    <name type="common">Mouse-ear cress</name>
    <dbReference type="NCBI Taxonomy" id="3702"/>
    <lineage>
        <taxon>Eukaryota</taxon>
        <taxon>Viridiplantae</taxon>
        <taxon>Streptophyta</taxon>
        <taxon>Embryophyta</taxon>
        <taxon>Tracheophyta</taxon>
        <taxon>Spermatophyta</taxon>
        <taxon>Magnoliopsida</taxon>
        <taxon>eudicotyledons</taxon>
        <taxon>Gunneridae</taxon>
        <taxon>Pentapetalae</taxon>
        <taxon>rosids</taxon>
        <taxon>malvids</taxon>
        <taxon>Brassicales</taxon>
        <taxon>Brassicaceae</taxon>
        <taxon>Camelineae</taxon>
        <taxon>Arabidopsis</taxon>
    </lineage>
</organism>